<gene>
    <name type="primary">rplV</name>
    <name type="synonym">rpl22</name>
</gene>
<accession>Q46229</accession>
<sequence>MKVKAVASQIPVTPRKVCLVVDLIRGQKIKEAEAILTLNSKSAAPIVLKLLKSAVANAVNNFNLNKDDLYVEEIFVNES</sequence>
<protein>
    <recommendedName>
        <fullName evidence="2">Large ribosomal subunit protein uL22</fullName>
    </recommendedName>
    <alternativeName>
        <fullName>50S ribosomal protein L22</fullName>
    </alternativeName>
</protein>
<keyword id="KW-0687">Ribonucleoprotein</keyword>
<keyword id="KW-0689">Ribosomal protein</keyword>
<keyword id="KW-0694">RNA-binding</keyword>
<keyword id="KW-0699">rRNA-binding</keyword>
<reference key="1">
    <citation type="journal article" date="1994" name="J. Bacteriol.">
        <title>Phylogeny of mycoplasmalike organisms (phytoplasmas): a basis for their classification.</title>
        <authorList>
            <person name="Gundersen D.E."/>
            <person name="Lee I.M."/>
            <person name="Rehner S.A."/>
            <person name="Davis R.E."/>
            <person name="Kingsbury D.T."/>
        </authorList>
    </citation>
    <scope>NUCLEOTIDE SEQUENCE [GENOMIC DNA]</scope>
</reference>
<comment type="function">
    <text evidence="1">This protein binds specifically to 23S rRNA; its binding is stimulated by other ribosomal proteins, e.g. L4, L17, and L20. It is important during the early stages of 50S assembly. It makes multiple contacts with different domains of the 23S rRNA in the assembled 50S subunit and ribosome (By similarity).</text>
</comment>
<comment type="function">
    <text evidence="1">The globular domain of the protein is located near the polypeptide exit tunnel on the outside of the subunit, while an extended beta-hairpin is found that lines the wall of the exit tunnel in the center of the 70S ribosome.</text>
</comment>
<comment type="subunit">
    <text evidence="1">Part of the 50S ribosomal subunit.</text>
</comment>
<comment type="similarity">
    <text evidence="2">Belongs to the universal ribosomal protein uL22 family.</text>
</comment>
<evidence type="ECO:0000250" key="1"/>
<evidence type="ECO:0000305" key="2"/>
<name>RL22_CLOPP</name>
<organism>
    <name type="scientific">Clover proliferation phytoplasma</name>
    <dbReference type="NCBI Taxonomy" id="35776"/>
    <lineage>
        <taxon>Bacteria</taxon>
        <taxon>Bacillati</taxon>
        <taxon>Mycoplasmatota</taxon>
        <taxon>Mollicutes</taxon>
        <taxon>Acholeplasmatales</taxon>
        <taxon>Acholeplasmataceae</taxon>
        <taxon>Candidatus Phytoplasma</taxon>
        <taxon>16SrVI (Clover proliferation group)</taxon>
    </lineage>
</organism>
<feature type="chain" id="PRO_0000125144" description="Large ribosomal subunit protein uL22">
    <location>
        <begin position="1"/>
        <end position="79" status="greater than"/>
    </location>
</feature>
<feature type="non-terminal residue">
    <location>
        <position position="79"/>
    </location>
</feature>
<dbReference type="EMBL" id="L27011">
    <property type="protein sequence ID" value="AAA83939.1"/>
    <property type="molecule type" value="Genomic_DNA"/>
</dbReference>
<dbReference type="SMR" id="Q46229"/>
<dbReference type="GO" id="GO:0022625">
    <property type="term" value="C:cytosolic large ribosomal subunit"/>
    <property type="evidence" value="ECO:0007669"/>
    <property type="project" value="TreeGrafter"/>
</dbReference>
<dbReference type="GO" id="GO:0019843">
    <property type="term" value="F:rRNA binding"/>
    <property type="evidence" value="ECO:0007669"/>
    <property type="project" value="UniProtKB-KW"/>
</dbReference>
<dbReference type="GO" id="GO:0003735">
    <property type="term" value="F:structural constituent of ribosome"/>
    <property type="evidence" value="ECO:0007669"/>
    <property type="project" value="InterPro"/>
</dbReference>
<dbReference type="GO" id="GO:0006412">
    <property type="term" value="P:translation"/>
    <property type="evidence" value="ECO:0007669"/>
    <property type="project" value="InterPro"/>
</dbReference>
<dbReference type="CDD" id="cd00336">
    <property type="entry name" value="Ribosomal_L22"/>
    <property type="match status" value="1"/>
</dbReference>
<dbReference type="Gene3D" id="3.90.470.10">
    <property type="entry name" value="Ribosomal protein L22/L17"/>
    <property type="match status" value="1"/>
</dbReference>
<dbReference type="InterPro" id="IPR001063">
    <property type="entry name" value="Ribosomal_uL22"/>
</dbReference>
<dbReference type="InterPro" id="IPR047867">
    <property type="entry name" value="Ribosomal_uL22_bac/org-type"/>
</dbReference>
<dbReference type="InterPro" id="IPR036394">
    <property type="entry name" value="Ribosomal_uL22_sf"/>
</dbReference>
<dbReference type="PANTHER" id="PTHR13501">
    <property type="entry name" value="CHLOROPLAST 50S RIBOSOMAL PROTEIN L22-RELATED"/>
    <property type="match status" value="1"/>
</dbReference>
<dbReference type="PANTHER" id="PTHR13501:SF8">
    <property type="entry name" value="LARGE RIBOSOMAL SUBUNIT PROTEIN UL22M"/>
    <property type="match status" value="1"/>
</dbReference>
<dbReference type="Pfam" id="PF00237">
    <property type="entry name" value="Ribosomal_L22"/>
    <property type="match status" value="1"/>
</dbReference>
<dbReference type="SUPFAM" id="SSF54843">
    <property type="entry name" value="Ribosomal protein L22"/>
    <property type="match status" value="1"/>
</dbReference>
<proteinExistence type="inferred from homology"/>